<proteinExistence type="evidence at protein level"/>
<comment type="function">
    <text>Plays a fundamental role in microtubule-organizing center structure and function.</text>
</comment>
<comment type="function">
    <text evidence="2">As a component of the TREX-2 complex, involved in the export of mRNAs to the cytoplasm through the nuclear pores.</text>
</comment>
<comment type="subunit">
    <text evidence="1 2">Monomer (By similarity). Component of the TREX-2 complex (transcription and export complex 2), composed of at least ENY2, GANP, PCID2, SEM1, and either centrin CETN2 or CETN3. Interacts with USP49 (By similarity).</text>
</comment>
<comment type="subcellular location">
    <subcellularLocation>
        <location evidence="2">Cytoplasm</location>
        <location evidence="2">Cytoskeleton</location>
        <location evidence="2">Microtubule organizing center</location>
        <location evidence="2">Centrosome</location>
    </subcellularLocation>
    <subcellularLocation>
        <location evidence="2">Nucleus</location>
        <location evidence="2">Nucleolus</location>
    </subcellularLocation>
    <subcellularLocation>
        <location evidence="2">Nucleus envelope</location>
    </subcellularLocation>
    <subcellularLocation>
        <location evidence="2">Nucleus</location>
        <location evidence="2">Nuclear pore complex</location>
    </subcellularLocation>
    <subcellularLocation>
        <location evidence="2">Cytoplasm</location>
        <location evidence="2">Cytoskeleton</location>
        <location evidence="2">Microtubule organizing center</location>
        <location evidence="2">Centrosome</location>
        <location evidence="2">Centriole</location>
    </subcellularLocation>
    <text evidence="2">Centrosome of interphase and mitotic cells. Localizes to centriole distal lumen (By similarity). Localization at the nuclear pore complex requires NUP153 and TPR (By similarity).</text>
</comment>
<comment type="similarity">
    <text evidence="4">Belongs to the centrin family.</text>
</comment>
<dbReference type="EMBL" id="Y12474">
    <property type="protein sequence ID" value="CAA73078.1"/>
    <property type="molecule type" value="mRNA"/>
</dbReference>
<dbReference type="EMBL" id="BC002162">
    <property type="protein sequence ID" value="AAH02162.1"/>
    <property type="molecule type" value="mRNA"/>
</dbReference>
<dbReference type="EMBL" id="BC054097">
    <property type="protein sequence ID" value="AAH54097.1"/>
    <property type="molecule type" value="mRNA"/>
</dbReference>
<dbReference type="CCDS" id="CCDS26663.1"/>
<dbReference type="RefSeq" id="NP_031710.1">
    <property type="nucleotide sequence ID" value="NM_007684.4"/>
</dbReference>
<dbReference type="SMR" id="O35648"/>
<dbReference type="FunCoup" id="O35648">
    <property type="interactions" value="1112"/>
</dbReference>
<dbReference type="STRING" id="10090.ENSMUSP00000022009"/>
<dbReference type="iPTMnet" id="O35648"/>
<dbReference type="PhosphoSitePlus" id="O35648"/>
<dbReference type="PaxDb" id="10090-ENSMUSP00000022009"/>
<dbReference type="PeptideAtlas" id="O35648"/>
<dbReference type="ProteomicsDB" id="280078"/>
<dbReference type="Pumba" id="O35648"/>
<dbReference type="Antibodypedia" id="24818">
    <property type="antibodies" value="196 antibodies from 24 providers"/>
</dbReference>
<dbReference type="DNASU" id="12626"/>
<dbReference type="Ensembl" id="ENSMUST00000022009.10">
    <property type="protein sequence ID" value="ENSMUSP00000022009.9"/>
    <property type="gene ID" value="ENSMUSG00000021537.10"/>
</dbReference>
<dbReference type="GeneID" id="12626"/>
<dbReference type="KEGG" id="mmu:12626"/>
<dbReference type="UCSC" id="uc007rid.1">
    <property type="organism name" value="mouse"/>
</dbReference>
<dbReference type="AGR" id="MGI:1097706"/>
<dbReference type="CTD" id="1070"/>
<dbReference type="MGI" id="MGI:1097706">
    <property type="gene designation" value="Cetn3"/>
</dbReference>
<dbReference type="VEuPathDB" id="HostDB:ENSMUSG00000021537"/>
<dbReference type="eggNOG" id="KOG0028">
    <property type="taxonomic scope" value="Eukaryota"/>
</dbReference>
<dbReference type="GeneTree" id="ENSGT00940000157995"/>
<dbReference type="HOGENOM" id="CLU_061288_18_1_1"/>
<dbReference type="InParanoid" id="O35648"/>
<dbReference type="OMA" id="EFFMIMK"/>
<dbReference type="OrthoDB" id="343296at2759"/>
<dbReference type="PhylomeDB" id="O35648"/>
<dbReference type="TreeFam" id="TF101141"/>
<dbReference type="BioGRID-ORCS" id="12626">
    <property type="hits" value="6 hits in 78 CRISPR screens"/>
</dbReference>
<dbReference type="CD-CODE" id="01CA17F3">
    <property type="entry name" value="Centrosome"/>
</dbReference>
<dbReference type="ChiTaRS" id="Cetn3">
    <property type="organism name" value="mouse"/>
</dbReference>
<dbReference type="PRO" id="PR:O35648"/>
<dbReference type="Proteomes" id="UP000000589">
    <property type="component" value="Chromosome 13"/>
</dbReference>
<dbReference type="RNAct" id="O35648">
    <property type="molecule type" value="protein"/>
</dbReference>
<dbReference type="Bgee" id="ENSMUSG00000021537">
    <property type="expression patterns" value="Expressed in cortical plate and 280 other cell types or tissues"/>
</dbReference>
<dbReference type="ExpressionAtlas" id="O35648">
    <property type="expression patterns" value="baseline and differential"/>
</dbReference>
<dbReference type="GO" id="GO:0005814">
    <property type="term" value="C:centriole"/>
    <property type="evidence" value="ECO:0000314"/>
    <property type="project" value="MGI"/>
</dbReference>
<dbReference type="GO" id="GO:0005813">
    <property type="term" value="C:centrosome"/>
    <property type="evidence" value="ECO:0007669"/>
    <property type="project" value="UniProtKB-SubCell"/>
</dbReference>
<dbReference type="GO" id="GO:0036064">
    <property type="term" value="C:ciliary basal body"/>
    <property type="evidence" value="ECO:0000314"/>
    <property type="project" value="MGI"/>
</dbReference>
<dbReference type="GO" id="GO:0035869">
    <property type="term" value="C:ciliary transition zone"/>
    <property type="evidence" value="ECO:0000314"/>
    <property type="project" value="MGI"/>
</dbReference>
<dbReference type="GO" id="GO:0005737">
    <property type="term" value="C:cytoplasm"/>
    <property type="evidence" value="ECO:0007669"/>
    <property type="project" value="UniProtKB-KW"/>
</dbReference>
<dbReference type="GO" id="GO:0044615">
    <property type="term" value="C:nuclear pore nuclear basket"/>
    <property type="evidence" value="ECO:0000250"/>
    <property type="project" value="UniProtKB"/>
</dbReference>
<dbReference type="GO" id="GO:0005730">
    <property type="term" value="C:nucleolus"/>
    <property type="evidence" value="ECO:0007669"/>
    <property type="project" value="UniProtKB-SubCell"/>
</dbReference>
<dbReference type="GO" id="GO:0032391">
    <property type="term" value="C:photoreceptor connecting cilium"/>
    <property type="evidence" value="ECO:0000314"/>
    <property type="project" value="MGI"/>
</dbReference>
<dbReference type="GO" id="GO:0070390">
    <property type="term" value="C:transcription export complex 2"/>
    <property type="evidence" value="ECO:0000250"/>
    <property type="project" value="UniProtKB"/>
</dbReference>
<dbReference type="GO" id="GO:0005509">
    <property type="term" value="F:calcium ion binding"/>
    <property type="evidence" value="ECO:0007669"/>
    <property type="project" value="InterPro"/>
</dbReference>
<dbReference type="GO" id="GO:0031683">
    <property type="term" value="F:G-protein beta/gamma-subunit complex binding"/>
    <property type="evidence" value="ECO:0000314"/>
    <property type="project" value="MGI"/>
</dbReference>
<dbReference type="GO" id="GO:0008017">
    <property type="term" value="F:microtubule binding"/>
    <property type="evidence" value="ECO:0000314"/>
    <property type="project" value="MGI"/>
</dbReference>
<dbReference type="GO" id="GO:0051301">
    <property type="term" value="P:cell division"/>
    <property type="evidence" value="ECO:0007669"/>
    <property type="project" value="UniProtKB-KW"/>
</dbReference>
<dbReference type="GO" id="GO:0051028">
    <property type="term" value="P:mRNA transport"/>
    <property type="evidence" value="ECO:0007669"/>
    <property type="project" value="UniProtKB-KW"/>
</dbReference>
<dbReference type="GO" id="GO:0015031">
    <property type="term" value="P:protein transport"/>
    <property type="evidence" value="ECO:0007669"/>
    <property type="project" value="UniProtKB-KW"/>
</dbReference>
<dbReference type="CDD" id="cd00051">
    <property type="entry name" value="EFh"/>
    <property type="match status" value="1"/>
</dbReference>
<dbReference type="FunFam" id="1.10.238.10:FF:000122">
    <property type="entry name" value="Centrin 3"/>
    <property type="match status" value="1"/>
</dbReference>
<dbReference type="FunFam" id="1.10.238.10:FF:000189">
    <property type="entry name" value="Centrin 3"/>
    <property type="match status" value="1"/>
</dbReference>
<dbReference type="Gene3D" id="1.10.238.10">
    <property type="entry name" value="EF-hand"/>
    <property type="match status" value="2"/>
</dbReference>
<dbReference type="InterPro" id="IPR050230">
    <property type="entry name" value="CALM/Myosin/TropC-like"/>
</dbReference>
<dbReference type="InterPro" id="IPR011992">
    <property type="entry name" value="EF-hand-dom_pair"/>
</dbReference>
<dbReference type="InterPro" id="IPR018247">
    <property type="entry name" value="EF_Hand_1_Ca_BS"/>
</dbReference>
<dbReference type="InterPro" id="IPR002048">
    <property type="entry name" value="EF_hand_dom"/>
</dbReference>
<dbReference type="PANTHER" id="PTHR23048:SF48">
    <property type="entry name" value="CENTRIN 3"/>
    <property type="match status" value="1"/>
</dbReference>
<dbReference type="PANTHER" id="PTHR23048">
    <property type="entry name" value="MYOSIN LIGHT CHAIN 1, 3"/>
    <property type="match status" value="1"/>
</dbReference>
<dbReference type="Pfam" id="PF13499">
    <property type="entry name" value="EF-hand_7"/>
    <property type="match status" value="2"/>
</dbReference>
<dbReference type="SMART" id="SM00054">
    <property type="entry name" value="EFh"/>
    <property type="match status" value="4"/>
</dbReference>
<dbReference type="SUPFAM" id="SSF47473">
    <property type="entry name" value="EF-hand"/>
    <property type="match status" value="1"/>
</dbReference>
<dbReference type="PROSITE" id="PS00018">
    <property type="entry name" value="EF_HAND_1"/>
    <property type="match status" value="2"/>
</dbReference>
<dbReference type="PROSITE" id="PS50222">
    <property type="entry name" value="EF_HAND_2"/>
    <property type="match status" value="4"/>
</dbReference>
<feature type="chain" id="PRO_0000073564" description="Centrin-3">
    <location>
        <begin position="1"/>
        <end position="167"/>
    </location>
</feature>
<feature type="domain" description="EF-hand 1" evidence="3">
    <location>
        <begin position="25"/>
        <end position="60"/>
    </location>
</feature>
<feature type="domain" description="EF-hand 2" evidence="3">
    <location>
        <begin position="61"/>
        <end position="96"/>
    </location>
</feature>
<feature type="domain" description="EF-hand 3" evidence="3">
    <location>
        <begin position="98"/>
        <end position="133"/>
    </location>
</feature>
<feature type="domain" description="EF-hand 4" evidence="3">
    <location>
        <begin position="134"/>
        <end position="167"/>
    </location>
</feature>
<feature type="binding site" evidence="3">
    <location>
        <position position="38"/>
    </location>
    <ligand>
        <name>Ca(2+)</name>
        <dbReference type="ChEBI" id="CHEBI:29108"/>
        <label>1</label>
    </ligand>
</feature>
<feature type="binding site" evidence="3">
    <location>
        <position position="40"/>
    </location>
    <ligand>
        <name>Ca(2+)</name>
        <dbReference type="ChEBI" id="CHEBI:29108"/>
        <label>1</label>
    </ligand>
</feature>
<feature type="binding site" evidence="3">
    <location>
        <position position="42"/>
    </location>
    <ligand>
        <name>Ca(2+)</name>
        <dbReference type="ChEBI" id="CHEBI:29108"/>
        <label>1</label>
    </ligand>
</feature>
<feature type="binding site" evidence="3">
    <location>
        <position position="49"/>
    </location>
    <ligand>
        <name>Ca(2+)</name>
        <dbReference type="ChEBI" id="CHEBI:29108"/>
        <label>1</label>
    </ligand>
</feature>
<feature type="binding site" evidence="3">
    <location>
        <position position="147"/>
    </location>
    <ligand>
        <name>Ca(2+)</name>
        <dbReference type="ChEBI" id="CHEBI:29108"/>
        <label>2</label>
    </ligand>
</feature>
<feature type="binding site" evidence="3">
    <location>
        <position position="149"/>
    </location>
    <ligand>
        <name>Ca(2+)</name>
        <dbReference type="ChEBI" id="CHEBI:29108"/>
        <label>2</label>
    </ligand>
</feature>
<feature type="binding site" evidence="3">
    <location>
        <position position="151"/>
    </location>
    <ligand>
        <name>Ca(2+)</name>
        <dbReference type="ChEBI" id="CHEBI:29108"/>
        <label>2</label>
    </ligand>
</feature>
<feature type="binding site" evidence="3">
    <location>
        <position position="153"/>
    </location>
    <ligand>
        <name>Ca(2+)</name>
        <dbReference type="ChEBI" id="CHEBI:29108"/>
        <label>2</label>
    </ligand>
</feature>
<feature type="binding site" evidence="3">
    <location>
        <position position="158"/>
    </location>
    <ligand>
        <name>Ca(2+)</name>
        <dbReference type="ChEBI" id="CHEBI:29108"/>
        <label>2</label>
    </ligand>
</feature>
<feature type="modified residue" description="Phosphoserine" evidence="2">
    <location>
        <position position="135"/>
    </location>
</feature>
<protein>
    <recommendedName>
        <fullName>Centrin-3</fullName>
    </recommendedName>
</protein>
<evidence type="ECO:0000250" key="1"/>
<evidence type="ECO:0000250" key="2">
    <source>
        <dbReference type="UniProtKB" id="O15182"/>
    </source>
</evidence>
<evidence type="ECO:0000255" key="3">
    <source>
        <dbReference type="PROSITE-ProRule" id="PRU00448"/>
    </source>
</evidence>
<evidence type="ECO:0000305" key="4"/>
<keyword id="KW-0106">Calcium</keyword>
<keyword id="KW-0131">Cell cycle</keyword>
<keyword id="KW-0132">Cell division</keyword>
<keyword id="KW-0963">Cytoplasm</keyword>
<keyword id="KW-0206">Cytoskeleton</keyword>
<keyword id="KW-0479">Metal-binding</keyword>
<keyword id="KW-0498">Mitosis</keyword>
<keyword id="KW-0509">mRNA transport</keyword>
<keyword id="KW-0906">Nuclear pore complex</keyword>
<keyword id="KW-0539">Nucleus</keyword>
<keyword id="KW-0597">Phosphoprotein</keyword>
<keyword id="KW-0653">Protein transport</keyword>
<keyword id="KW-1185">Reference proteome</keyword>
<keyword id="KW-0677">Repeat</keyword>
<keyword id="KW-0811">Translocation</keyword>
<keyword id="KW-0813">Transport</keyword>
<reference key="1">
    <citation type="journal article" date="1997" name="Proc. Natl. Acad. Sci. U.S.A.">
        <title>Identification of a new mammalian centrin gene, more closely related to Saccharomyces cerevisiae CDC31 gene.</title>
        <authorList>
            <person name="Middendorp S."/>
            <person name="Paoletti A."/>
            <person name="Schiebel E."/>
            <person name="Bornens M."/>
        </authorList>
    </citation>
    <scope>NUCLEOTIDE SEQUENCE [MRNA]</scope>
    <source>
        <tissue>Spleen</tissue>
    </source>
</reference>
<reference key="2">
    <citation type="journal article" date="2004" name="Genome Res.">
        <title>The status, quality, and expansion of the NIH full-length cDNA project: the Mammalian Gene Collection (MGC).</title>
        <authorList>
            <consortium name="The MGC Project Team"/>
        </authorList>
    </citation>
    <scope>NUCLEOTIDE SEQUENCE [LARGE SCALE MRNA]</scope>
    <source>
        <strain>C57BL/6J</strain>
        <tissue>Embryo</tissue>
        <tissue>Mammary gland</tissue>
    </source>
</reference>
<reference key="3">
    <citation type="journal article" date="2010" name="Cell">
        <title>A tissue-specific atlas of mouse protein phosphorylation and expression.</title>
        <authorList>
            <person name="Huttlin E.L."/>
            <person name="Jedrychowski M.P."/>
            <person name="Elias J.E."/>
            <person name="Goswami T."/>
            <person name="Rad R."/>
            <person name="Beausoleil S.A."/>
            <person name="Villen J."/>
            <person name="Haas W."/>
            <person name="Sowa M.E."/>
            <person name="Gygi S.P."/>
        </authorList>
    </citation>
    <scope>IDENTIFICATION BY MASS SPECTROMETRY [LARGE SCALE ANALYSIS]</scope>
    <source>
        <tissue>Lung</tissue>
        <tissue>Spleen</tissue>
        <tissue>Testis</tissue>
    </source>
</reference>
<organism>
    <name type="scientific">Mus musculus</name>
    <name type="common">Mouse</name>
    <dbReference type="NCBI Taxonomy" id="10090"/>
    <lineage>
        <taxon>Eukaryota</taxon>
        <taxon>Metazoa</taxon>
        <taxon>Chordata</taxon>
        <taxon>Craniata</taxon>
        <taxon>Vertebrata</taxon>
        <taxon>Euteleostomi</taxon>
        <taxon>Mammalia</taxon>
        <taxon>Eutheria</taxon>
        <taxon>Euarchontoglires</taxon>
        <taxon>Glires</taxon>
        <taxon>Rodentia</taxon>
        <taxon>Myomorpha</taxon>
        <taxon>Muroidea</taxon>
        <taxon>Muridae</taxon>
        <taxon>Murinae</taxon>
        <taxon>Mus</taxon>
        <taxon>Mus</taxon>
    </lineage>
</organism>
<accession>O35648</accession>
<gene>
    <name type="primary">Cetn3</name>
    <name type="synonym">Cen3</name>
</gene>
<name>CETN3_MOUSE</name>
<sequence length="167" mass="19519">MSLALRGELVVDKTKRKKRRELSEEQKQEIKDAFELFDTDKDQAIDYHELKVAMRALGFDVKKADVLKILKDYDREATGKITFEDFNEVVTDWILERDPHEEILKAFKLFDDDDSGKISLRNLRRVARELGENMSDEELRAMIEEFDKDGDGEINQEEFIAIMTGDI</sequence>